<accession>A1RPD5</accession>
<comment type="function">
    <text evidence="1">Involved in iron-sulfur (Fe-S) cluster assembly. May act as a regulator of Fe-S biogenesis.</text>
</comment>
<comment type="similarity">
    <text evidence="1">Belongs to the frataxin family.</text>
</comment>
<organism>
    <name type="scientific">Shewanella sp. (strain W3-18-1)</name>
    <dbReference type="NCBI Taxonomy" id="351745"/>
    <lineage>
        <taxon>Bacteria</taxon>
        <taxon>Pseudomonadati</taxon>
        <taxon>Pseudomonadota</taxon>
        <taxon>Gammaproteobacteria</taxon>
        <taxon>Alteromonadales</taxon>
        <taxon>Shewanellaceae</taxon>
        <taxon>Shewanella</taxon>
    </lineage>
</organism>
<protein>
    <recommendedName>
        <fullName evidence="1">Iron-sulfur cluster assembly protein CyaY</fullName>
    </recommendedName>
</protein>
<proteinExistence type="inferred from homology"/>
<sequence>MAMTDTEFHQLADDMFQAIESAIETAIDEQDADVDIDASGNVLQLEFVDGSKIVINKQEPLHEIWVATRFGGYHFGFVEGKWLDGRNGGEFMPFVQDSILRQGGIKLSF</sequence>
<keyword id="KW-0408">Iron</keyword>
<keyword id="KW-0479">Metal-binding</keyword>
<reference key="1">
    <citation type="submission" date="2006-12" db="EMBL/GenBank/DDBJ databases">
        <title>Complete sequence of Shewanella sp. W3-18-1.</title>
        <authorList>
            <consortium name="US DOE Joint Genome Institute"/>
            <person name="Copeland A."/>
            <person name="Lucas S."/>
            <person name="Lapidus A."/>
            <person name="Barry K."/>
            <person name="Detter J.C."/>
            <person name="Glavina del Rio T."/>
            <person name="Hammon N."/>
            <person name="Israni S."/>
            <person name="Dalin E."/>
            <person name="Tice H."/>
            <person name="Pitluck S."/>
            <person name="Chain P."/>
            <person name="Malfatti S."/>
            <person name="Shin M."/>
            <person name="Vergez L."/>
            <person name="Schmutz J."/>
            <person name="Larimer F."/>
            <person name="Land M."/>
            <person name="Hauser L."/>
            <person name="Kyrpides N."/>
            <person name="Lykidis A."/>
            <person name="Tiedje J."/>
            <person name="Richardson P."/>
        </authorList>
    </citation>
    <scope>NUCLEOTIDE SEQUENCE [LARGE SCALE GENOMIC DNA]</scope>
    <source>
        <strain>W3-18-1</strain>
    </source>
</reference>
<feature type="chain" id="PRO_1000010959" description="Iron-sulfur cluster assembly protein CyaY">
    <location>
        <begin position="1"/>
        <end position="109"/>
    </location>
</feature>
<evidence type="ECO:0000255" key="1">
    <source>
        <dbReference type="HAMAP-Rule" id="MF_00142"/>
    </source>
</evidence>
<dbReference type="EMBL" id="CP000503">
    <property type="protein sequence ID" value="ABM26530.1"/>
    <property type="molecule type" value="Genomic_DNA"/>
</dbReference>
<dbReference type="RefSeq" id="WP_011790961.1">
    <property type="nucleotide sequence ID" value="NC_008750.1"/>
</dbReference>
<dbReference type="SMR" id="A1RPD5"/>
<dbReference type="GeneID" id="67445077"/>
<dbReference type="KEGG" id="shw:Sputw3181_3724"/>
<dbReference type="HOGENOM" id="CLU_080880_3_0_6"/>
<dbReference type="Proteomes" id="UP000002597">
    <property type="component" value="Chromosome"/>
</dbReference>
<dbReference type="GO" id="GO:0005829">
    <property type="term" value="C:cytosol"/>
    <property type="evidence" value="ECO:0007669"/>
    <property type="project" value="TreeGrafter"/>
</dbReference>
<dbReference type="GO" id="GO:0008199">
    <property type="term" value="F:ferric iron binding"/>
    <property type="evidence" value="ECO:0007669"/>
    <property type="project" value="InterPro"/>
</dbReference>
<dbReference type="GO" id="GO:0008198">
    <property type="term" value="F:ferrous iron binding"/>
    <property type="evidence" value="ECO:0007669"/>
    <property type="project" value="TreeGrafter"/>
</dbReference>
<dbReference type="GO" id="GO:0016226">
    <property type="term" value="P:iron-sulfur cluster assembly"/>
    <property type="evidence" value="ECO:0007669"/>
    <property type="project" value="UniProtKB-UniRule"/>
</dbReference>
<dbReference type="CDD" id="cd00503">
    <property type="entry name" value="Frataxin"/>
    <property type="match status" value="1"/>
</dbReference>
<dbReference type="FunFam" id="3.30.920.10:FF:000005">
    <property type="entry name" value="Iron-sulfur cluster assembly protein CyaY"/>
    <property type="match status" value="1"/>
</dbReference>
<dbReference type="Gene3D" id="3.30.920.10">
    <property type="entry name" value="Frataxin/CyaY"/>
    <property type="match status" value="1"/>
</dbReference>
<dbReference type="HAMAP" id="MF_00142">
    <property type="entry name" value="CyaY"/>
    <property type="match status" value="1"/>
</dbReference>
<dbReference type="InterPro" id="IPR047584">
    <property type="entry name" value="CyaY"/>
</dbReference>
<dbReference type="InterPro" id="IPR002908">
    <property type="entry name" value="Frataxin/CyaY"/>
</dbReference>
<dbReference type="InterPro" id="IPR036524">
    <property type="entry name" value="Frataxin/CyaY_sf"/>
</dbReference>
<dbReference type="InterPro" id="IPR020895">
    <property type="entry name" value="Frataxin_CS"/>
</dbReference>
<dbReference type="NCBIfam" id="TIGR03421">
    <property type="entry name" value="FeS_CyaY"/>
    <property type="match status" value="1"/>
</dbReference>
<dbReference type="PANTHER" id="PTHR16821">
    <property type="entry name" value="FRATAXIN"/>
    <property type="match status" value="1"/>
</dbReference>
<dbReference type="PANTHER" id="PTHR16821:SF2">
    <property type="entry name" value="FRATAXIN, MITOCHONDRIAL"/>
    <property type="match status" value="1"/>
</dbReference>
<dbReference type="Pfam" id="PF01491">
    <property type="entry name" value="Frataxin_Cyay"/>
    <property type="match status" value="1"/>
</dbReference>
<dbReference type="SMART" id="SM01219">
    <property type="entry name" value="Frataxin_Cyay"/>
    <property type="match status" value="1"/>
</dbReference>
<dbReference type="SUPFAM" id="SSF55387">
    <property type="entry name" value="Frataxin/Nqo15-like"/>
    <property type="match status" value="1"/>
</dbReference>
<dbReference type="PROSITE" id="PS01344">
    <property type="entry name" value="FRATAXIN_1"/>
    <property type="match status" value="1"/>
</dbReference>
<dbReference type="PROSITE" id="PS50810">
    <property type="entry name" value="FRATAXIN_2"/>
    <property type="match status" value="1"/>
</dbReference>
<name>CYAY_SHESW</name>
<gene>
    <name evidence="1" type="primary">cyaY</name>
    <name type="ordered locus">Sputw3181_3724</name>
</gene>